<proteinExistence type="inferred from homology"/>
<dbReference type="EC" id="2.7.1.16" evidence="1"/>
<dbReference type="EMBL" id="CP000802">
    <property type="protein sequence ID" value="ABV04467.1"/>
    <property type="molecule type" value="Genomic_DNA"/>
</dbReference>
<dbReference type="RefSeq" id="WP_000951795.1">
    <property type="nucleotide sequence ID" value="NC_009800.1"/>
</dbReference>
<dbReference type="SMR" id="A7ZW13"/>
<dbReference type="KEGG" id="ecx:EcHS_A0067"/>
<dbReference type="HOGENOM" id="CLU_009281_9_1_6"/>
<dbReference type="UniPathway" id="UPA00145">
    <property type="reaction ID" value="UER00566"/>
</dbReference>
<dbReference type="GO" id="GO:0005737">
    <property type="term" value="C:cytoplasm"/>
    <property type="evidence" value="ECO:0007669"/>
    <property type="project" value="TreeGrafter"/>
</dbReference>
<dbReference type="GO" id="GO:0005524">
    <property type="term" value="F:ATP binding"/>
    <property type="evidence" value="ECO:0007669"/>
    <property type="project" value="UniProtKB-KW"/>
</dbReference>
<dbReference type="GO" id="GO:0019150">
    <property type="term" value="F:D-ribulokinase activity"/>
    <property type="evidence" value="ECO:0007669"/>
    <property type="project" value="RHEA"/>
</dbReference>
<dbReference type="GO" id="GO:0008741">
    <property type="term" value="F:ribulokinase activity"/>
    <property type="evidence" value="ECO:0007669"/>
    <property type="project" value="UniProtKB-UniRule"/>
</dbReference>
<dbReference type="GO" id="GO:0019569">
    <property type="term" value="P:L-arabinose catabolic process to xylulose 5-phosphate"/>
    <property type="evidence" value="ECO:0007669"/>
    <property type="project" value="UniProtKB-UniRule"/>
</dbReference>
<dbReference type="CDD" id="cd07781">
    <property type="entry name" value="ASKHA_NBD_FGGY_L-RBK"/>
    <property type="match status" value="1"/>
</dbReference>
<dbReference type="Gene3D" id="1.20.58.2240">
    <property type="match status" value="1"/>
</dbReference>
<dbReference type="Gene3D" id="3.30.420.40">
    <property type="match status" value="1"/>
</dbReference>
<dbReference type="HAMAP" id="MF_00520">
    <property type="entry name" value="Ribulokinase"/>
    <property type="match status" value="1"/>
</dbReference>
<dbReference type="InterPro" id="IPR043129">
    <property type="entry name" value="ATPase_NBD"/>
</dbReference>
<dbReference type="InterPro" id="IPR018485">
    <property type="entry name" value="FGGY_C"/>
</dbReference>
<dbReference type="InterPro" id="IPR005929">
    <property type="entry name" value="Ribulokinase"/>
</dbReference>
<dbReference type="NCBIfam" id="TIGR01234">
    <property type="entry name" value="L-ribulokinase"/>
    <property type="match status" value="1"/>
</dbReference>
<dbReference type="NCBIfam" id="NF003154">
    <property type="entry name" value="PRK04123.1"/>
    <property type="match status" value="1"/>
</dbReference>
<dbReference type="PANTHER" id="PTHR43435:SF4">
    <property type="entry name" value="FGGY CARBOHYDRATE KINASE DOMAIN-CONTAINING PROTEIN"/>
    <property type="match status" value="1"/>
</dbReference>
<dbReference type="PANTHER" id="PTHR43435">
    <property type="entry name" value="RIBULOKINASE"/>
    <property type="match status" value="1"/>
</dbReference>
<dbReference type="Pfam" id="PF02782">
    <property type="entry name" value="FGGY_C"/>
    <property type="match status" value="1"/>
</dbReference>
<dbReference type="SUPFAM" id="SSF53067">
    <property type="entry name" value="Actin-like ATPase domain"/>
    <property type="match status" value="2"/>
</dbReference>
<organism>
    <name type="scientific">Escherichia coli O9:H4 (strain HS)</name>
    <dbReference type="NCBI Taxonomy" id="331112"/>
    <lineage>
        <taxon>Bacteria</taxon>
        <taxon>Pseudomonadati</taxon>
        <taxon>Pseudomonadota</taxon>
        <taxon>Gammaproteobacteria</taxon>
        <taxon>Enterobacterales</taxon>
        <taxon>Enterobacteriaceae</taxon>
        <taxon>Escherichia</taxon>
    </lineage>
</organism>
<keyword id="KW-0054">Arabinose catabolism</keyword>
<keyword id="KW-0067">ATP-binding</keyword>
<keyword id="KW-0119">Carbohydrate metabolism</keyword>
<keyword id="KW-0418">Kinase</keyword>
<keyword id="KW-0547">Nucleotide-binding</keyword>
<keyword id="KW-0808">Transferase</keyword>
<feature type="chain" id="PRO_1000060918" description="Ribulokinase">
    <location>
        <begin position="1"/>
        <end position="566"/>
    </location>
</feature>
<evidence type="ECO:0000255" key="1">
    <source>
        <dbReference type="HAMAP-Rule" id="MF_00520"/>
    </source>
</evidence>
<protein>
    <recommendedName>
        <fullName evidence="1">Ribulokinase</fullName>
        <ecNumber evidence="1">2.7.1.16</ecNumber>
    </recommendedName>
</protein>
<comment type="catalytic activity">
    <reaction evidence="1">
        <text>D-ribulose + ATP = D-ribulose 5-phosphate + ADP + H(+)</text>
        <dbReference type="Rhea" id="RHEA:17601"/>
        <dbReference type="ChEBI" id="CHEBI:15378"/>
        <dbReference type="ChEBI" id="CHEBI:17173"/>
        <dbReference type="ChEBI" id="CHEBI:30616"/>
        <dbReference type="ChEBI" id="CHEBI:58121"/>
        <dbReference type="ChEBI" id="CHEBI:456216"/>
        <dbReference type="EC" id="2.7.1.16"/>
    </reaction>
</comment>
<comment type="catalytic activity">
    <reaction evidence="1">
        <text>L-ribulose + ATP = L-ribulose 5-phosphate + ADP + H(+)</text>
        <dbReference type="Rhea" id="RHEA:22072"/>
        <dbReference type="ChEBI" id="CHEBI:15378"/>
        <dbReference type="ChEBI" id="CHEBI:16880"/>
        <dbReference type="ChEBI" id="CHEBI:30616"/>
        <dbReference type="ChEBI" id="CHEBI:58226"/>
        <dbReference type="ChEBI" id="CHEBI:456216"/>
        <dbReference type="EC" id="2.7.1.16"/>
    </reaction>
</comment>
<comment type="pathway">
    <text evidence="1">Carbohydrate degradation; L-arabinose degradation via L-ribulose; D-xylulose 5-phosphate from L-arabinose (bacterial route): step 2/3.</text>
</comment>
<comment type="similarity">
    <text evidence="1">Belongs to the ribulokinase family.</text>
</comment>
<reference key="1">
    <citation type="journal article" date="2008" name="J. Bacteriol.">
        <title>The pangenome structure of Escherichia coli: comparative genomic analysis of E. coli commensal and pathogenic isolates.</title>
        <authorList>
            <person name="Rasko D.A."/>
            <person name="Rosovitz M.J."/>
            <person name="Myers G.S.A."/>
            <person name="Mongodin E.F."/>
            <person name="Fricke W.F."/>
            <person name="Gajer P."/>
            <person name="Crabtree J."/>
            <person name="Sebaihia M."/>
            <person name="Thomson N.R."/>
            <person name="Chaudhuri R."/>
            <person name="Henderson I.R."/>
            <person name="Sperandio V."/>
            <person name="Ravel J."/>
        </authorList>
    </citation>
    <scope>NUCLEOTIDE SEQUENCE [LARGE SCALE GENOMIC DNA]</scope>
    <source>
        <strain>HS</strain>
    </source>
</reference>
<name>ARAB_ECOHS</name>
<sequence>MAIAIGLDFGSDSVRALAVDCASGEEIATSVEWYPRWQKGQFCDAPNNQFRHHPRDYIESMEAALKTVLAELSVEQRAAVVGIGVDTTGSTPAPIDADGNVLALRPEFAENPNAMFVLWKDHTAVEEAEEITRLCHAPGNVDYSRYIGGIYSSEWFWAKILHVTRQDTAVAQSAASWIELCDWVPALLSGTTRPQDIRRGRCSAGHKSLWHESWGGLPPASFFDELDPILNRHLPSPLFTDTWTADIPVGTLCPEWAQRLGLPESVVISGGAFDCHMGAVGAGAQPNALVKVIGTSTCDILIADKQSVGERAVKGICGQVDGSVVPGFIGLEAGQSAFGDIYAWFGRVLGWPLEQLAAQHPELKAQINASQKQLLPALTEAWAKNPSLDHLPVVLDWFNGRRTPNANQRLKGVITDLNLATDAPLLFGGLIAATAFGARAIMECFTDQGIAVNNVMALGGIARKNQVIMQACCDVLNRPLQIVASDQCCALGAAIFAAVAAKVHADIPSAQQKMASAVEKTLQPRSEQAQRFEQLYRRYQQWAMSAEQHYLPTSAPAQAAQAVATL</sequence>
<accession>A7ZW13</accession>
<gene>
    <name evidence="1" type="primary">araB</name>
    <name type="ordered locus">EcHS_A0067</name>
</gene>